<organism>
    <name type="scientific">Rickettsia bellii (strain RML369-C)</name>
    <dbReference type="NCBI Taxonomy" id="336407"/>
    <lineage>
        <taxon>Bacteria</taxon>
        <taxon>Pseudomonadati</taxon>
        <taxon>Pseudomonadota</taxon>
        <taxon>Alphaproteobacteria</taxon>
        <taxon>Rickettsiales</taxon>
        <taxon>Rickettsiaceae</taxon>
        <taxon>Rickettsieae</taxon>
        <taxon>Rickettsia</taxon>
        <taxon>belli group</taxon>
    </lineage>
</organism>
<proteinExistence type="inferred from homology"/>
<comment type="similarity">
    <text evidence="2">Belongs to the glycosyltransferase 2 family.</text>
</comment>
<evidence type="ECO:0000256" key="1">
    <source>
        <dbReference type="SAM" id="MobiDB-lite"/>
    </source>
</evidence>
<evidence type="ECO:0000305" key="2"/>
<protein>
    <recommendedName>
        <fullName>Uncharacterized glycosyltransferase RBE_0706</fullName>
        <ecNumber>2.4.-.-</ecNumber>
    </recommendedName>
</protein>
<sequence length="690" mass="79784">MIIKQDKLSTFYPLVSIIIPVYNGANYMREAIDSALAQTYKNIEVIVVNDGSKDSGETEAIALSYGDKIRYFHKENGGCGSALNYGIKNMKGKYFSWLSHDDLYYPNKVEHQINILNKLNNKNTIIYGGYELVDKNGKFLYHIRPDSVLTTDKLNISLLPLLRGLIHGCSLLIPVKYFHEVDMFDETLPSTQDYDLWFKIFRVASIYFDKLILIKSRFHSEQGSKKISAHNEECNALWSSFLQKLTEEEMIKMEGSAYLFLTRTANFLSSTPYQEAYALANNMAKQILRDAKVSVIIPVYNRINWTIQSIESVLNQTHENFEVIVINDGSTEDISELIKFCKKDKRIQYFHKKNEGPASARNLGIKKSSGKYIAFLDSDDLFFHNKLELQLKFMEENNFIFSHTSYQRIDEEGKYLESINSGSFSGNVFPKIIQTCPIAMPTVMGTLALFQENLFPENIRSGEDCCLWISISSRNLLGGISKELSKVRIRGDNTTFMNPNKYSQGLINITSYVLNNAYLAKFAPFTINLLLTAVTQLKILESKNELELLKNEDESELLENEDKSESLENEDKSESLENEDKSESLENEDKSESLENEKKEKNVEKNNNYFTQYNYPIIKQKVRKYYVKKLLENKKKEENNYFISYLKIKLKSYYFIAKILILLTIASLKEDGVRATISKIKRWFKKHRRF</sequence>
<name>Y706_RICBR</name>
<accession>Q1RIM7</accession>
<dbReference type="EC" id="2.4.-.-"/>
<dbReference type="EMBL" id="CP000087">
    <property type="protein sequence ID" value="ABE04787.1"/>
    <property type="molecule type" value="Genomic_DNA"/>
</dbReference>
<dbReference type="RefSeq" id="WP_011477374.1">
    <property type="nucleotide sequence ID" value="NC_007940.1"/>
</dbReference>
<dbReference type="SMR" id="Q1RIM7"/>
<dbReference type="CAZy" id="GT2">
    <property type="family name" value="Glycosyltransferase Family 2"/>
</dbReference>
<dbReference type="KEGG" id="rbe:RBE_0706"/>
<dbReference type="eggNOG" id="COG0463">
    <property type="taxonomic scope" value="Bacteria"/>
</dbReference>
<dbReference type="eggNOG" id="COG1216">
    <property type="taxonomic scope" value="Bacteria"/>
</dbReference>
<dbReference type="HOGENOM" id="CLU_473176_0_0_5"/>
<dbReference type="OrthoDB" id="6383742at2"/>
<dbReference type="Proteomes" id="UP000001951">
    <property type="component" value="Chromosome"/>
</dbReference>
<dbReference type="GO" id="GO:0016758">
    <property type="term" value="F:hexosyltransferase activity"/>
    <property type="evidence" value="ECO:0007669"/>
    <property type="project" value="UniProtKB-ARBA"/>
</dbReference>
<dbReference type="GO" id="GO:0009058">
    <property type="term" value="P:biosynthetic process"/>
    <property type="evidence" value="ECO:0007669"/>
    <property type="project" value="UniProtKB-ARBA"/>
</dbReference>
<dbReference type="CDD" id="cd00761">
    <property type="entry name" value="Glyco_tranf_GTA_type"/>
    <property type="match status" value="1"/>
</dbReference>
<dbReference type="Gene3D" id="3.90.550.10">
    <property type="entry name" value="Spore Coat Polysaccharide Biosynthesis Protein SpsA, Chain A"/>
    <property type="match status" value="2"/>
</dbReference>
<dbReference type="InterPro" id="IPR001173">
    <property type="entry name" value="Glyco_trans_2-like"/>
</dbReference>
<dbReference type="InterPro" id="IPR029044">
    <property type="entry name" value="Nucleotide-diphossugar_trans"/>
</dbReference>
<dbReference type="PANTHER" id="PTHR22916">
    <property type="entry name" value="GLYCOSYLTRANSFERASE"/>
    <property type="match status" value="1"/>
</dbReference>
<dbReference type="PANTHER" id="PTHR22916:SF3">
    <property type="entry name" value="UDP-GLCNAC:BETAGAL BETA-1,3-N-ACETYLGLUCOSAMINYLTRANSFERASE-LIKE PROTEIN 1"/>
    <property type="match status" value="1"/>
</dbReference>
<dbReference type="Pfam" id="PF00535">
    <property type="entry name" value="Glycos_transf_2"/>
    <property type="match status" value="2"/>
</dbReference>
<dbReference type="SUPFAM" id="SSF53448">
    <property type="entry name" value="Nucleotide-diphospho-sugar transferases"/>
    <property type="match status" value="2"/>
</dbReference>
<keyword id="KW-0328">Glycosyltransferase</keyword>
<keyword id="KW-0808">Transferase</keyword>
<feature type="chain" id="PRO_0000268851" description="Uncharacterized glycosyltransferase RBE_0706">
    <location>
        <begin position="1"/>
        <end position="690"/>
    </location>
</feature>
<feature type="region of interest" description="Disordered" evidence="1">
    <location>
        <begin position="553"/>
        <end position="601"/>
    </location>
</feature>
<feature type="compositionally biased region" description="Basic and acidic residues" evidence="1">
    <location>
        <begin position="560"/>
        <end position="601"/>
    </location>
</feature>
<gene>
    <name type="ordered locus">RBE_0706</name>
</gene>
<reference key="1">
    <citation type="journal article" date="2006" name="PLoS Genet.">
        <title>Genome sequence of Rickettsia bellii illuminates the role of amoebae in gene exchanges between intracellular pathogens.</title>
        <authorList>
            <person name="Ogata H."/>
            <person name="La Scola B."/>
            <person name="Audic S."/>
            <person name="Renesto P."/>
            <person name="Blanc G."/>
            <person name="Robert C."/>
            <person name="Fournier P.-E."/>
            <person name="Claverie J.-M."/>
            <person name="Raoult D."/>
        </authorList>
    </citation>
    <scope>NUCLEOTIDE SEQUENCE [LARGE SCALE GENOMIC DNA]</scope>
    <source>
        <strain>RML369-C</strain>
    </source>
</reference>